<reference key="1">
    <citation type="journal article" date="2007" name="PLoS ONE">
        <title>Analysis of the neurotoxin complex genes in Clostridium botulinum A1-A4 and B1 strains: BoNT/A3, /Ba4 and /B1 clusters are located within plasmids.</title>
        <authorList>
            <person name="Smith T.J."/>
            <person name="Hill K.K."/>
            <person name="Foley B.T."/>
            <person name="Detter J.C."/>
            <person name="Munk A.C."/>
            <person name="Bruce D.C."/>
            <person name="Doggett N.A."/>
            <person name="Smith L.A."/>
            <person name="Marks J.D."/>
            <person name="Xie G."/>
            <person name="Brettin T.S."/>
        </authorList>
    </citation>
    <scope>NUCLEOTIDE SEQUENCE [LARGE SCALE GENOMIC DNA]</scope>
    <source>
        <strain>Loch Maree / Type A3</strain>
    </source>
</reference>
<feature type="chain" id="PRO_1000137415" description="Phosphatidylglycerol--prolipoprotein diacylglyceryl transferase">
    <location>
        <begin position="1"/>
        <end position="254"/>
    </location>
</feature>
<feature type="transmembrane region" description="Helical" evidence="1">
    <location>
        <begin position="11"/>
        <end position="31"/>
    </location>
</feature>
<feature type="transmembrane region" description="Helical" evidence="1">
    <location>
        <begin position="49"/>
        <end position="69"/>
    </location>
</feature>
<feature type="transmembrane region" description="Helical" evidence="1">
    <location>
        <begin position="84"/>
        <end position="104"/>
    </location>
</feature>
<feature type="transmembrane region" description="Helical" evidence="1">
    <location>
        <begin position="169"/>
        <end position="189"/>
    </location>
</feature>
<feature type="transmembrane region" description="Helical" evidence="1">
    <location>
        <begin position="196"/>
        <end position="216"/>
    </location>
</feature>
<feature type="transmembrane region" description="Helical" evidence="1">
    <location>
        <begin position="228"/>
        <end position="248"/>
    </location>
</feature>
<feature type="binding site" evidence="1">
    <location>
        <position position="130"/>
    </location>
    <ligand>
        <name>a 1,2-diacyl-sn-glycero-3-phospho-(1'-sn-glycerol)</name>
        <dbReference type="ChEBI" id="CHEBI:64716"/>
    </ligand>
</feature>
<accession>B1L108</accession>
<protein>
    <recommendedName>
        <fullName evidence="1">Phosphatidylglycerol--prolipoprotein diacylglyceryl transferase</fullName>
        <ecNumber evidence="1">2.5.1.145</ecNumber>
    </recommendedName>
</protein>
<dbReference type="EC" id="2.5.1.145" evidence="1"/>
<dbReference type="EMBL" id="CP000962">
    <property type="protein sequence ID" value="ACA55709.1"/>
    <property type="molecule type" value="Genomic_DNA"/>
</dbReference>
<dbReference type="RefSeq" id="WP_012343660.1">
    <property type="nucleotide sequence ID" value="NC_010520.1"/>
</dbReference>
<dbReference type="SMR" id="B1L108"/>
<dbReference type="KEGG" id="cbl:CLK_2606"/>
<dbReference type="HOGENOM" id="CLU_013386_0_1_9"/>
<dbReference type="UniPathway" id="UPA00664"/>
<dbReference type="GO" id="GO:0005886">
    <property type="term" value="C:plasma membrane"/>
    <property type="evidence" value="ECO:0007669"/>
    <property type="project" value="UniProtKB-SubCell"/>
</dbReference>
<dbReference type="GO" id="GO:0008961">
    <property type="term" value="F:phosphatidylglycerol-prolipoprotein diacylglyceryl transferase activity"/>
    <property type="evidence" value="ECO:0007669"/>
    <property type="project" value="UniProtKB-UniRule"/>
</dbReference>
<dbReference type="GO" id="GO:0042158">
    <property type="term" value="P:lipoprotein biosynthetic process"/>
    <property type="evidence" value="ECO:0007669"/>
    <property type="project" value="UniProtKB-UniRule"/>
</dbReference>
<dbReference type="HAMAP" id="MF_01147">
    <property type="entry name" value="Lgt"/>
    <property type="match status" value="1"/>
</dbReference>
<dbReference type="InterPro" id="IPR001640">
    <property type="entry name" value="Lgt"/>
</dbReference>
<dbReference type="NCBIfam" id="TIGR00544">
    <property type="entry name" value="lgt"/>
    <property type="match status" value="1"/>
</dbReference>
<dbReference type="PANTHER" id="PTHR30589:SF0">
    <property type="entry name" value="PHOSPHATIDYLGLYCEROL--PROLIPOPROTEIN DIACYLGLYCERYL TRANSFERASE"/>
    <property type="match status" value="1"/>
</dbReference>
<dbReference type="PANTHER" id="PTHR30589">
    <property type="entry name" value="PROLIPOPROTEIN DIACYLGLYCERYL TRANSFERASE"/>
    <property type="match status" value="1"/>
</dbReference>
<dbReference type="Pfam" id="PF01790">
    <property type="entry name" value="LGT"/>
    <property type="match status" value="1"/>
</dbReference>
<dbReference type="PROSITE" id="PS01311">
    <property type="entry name" value="LGT"/>
    <property type="match status" value="1"/>
</dbReference>
<organism>
    <name type="scientific">Clostridium botulinum (strain Loch Maree / Type A3)</name>
    <dbReference type="NCBI Taxonomy" id="498214"/>
    <lineage>
        <taxon>Bacteria</taxon>
        <taxon>Bacillati</taxon>
        <taxon>Bacillota</taxon>
        <taxon>Clostridia</taxon>
        <taxon>Eubacteriales</taxon>
        <taxon>Clostridiaceae</taxon>
        <taxon>Clostridium</taxon>
    </lineage>
</organism>
<name>LGT_CLOBM</name>
<comment type="function">
    <text evidence="1">Catalyzes the transfer of the diacylglyceryl group from phosphatidylglycerol to the sulfhydryl group of the N-terminal cysteine of a prolipoprotein, the first step in the formation of mature lipoproteins.</text>
</comment>
<comment type="catalytic activity">
    <reaction evidence="1">
        <text>L-cysteinyl-[prolipoprotein] + a 1,2-diacyl-sn-glycero-3-phospho-(1'-sn-glycerol) = an S-1,2-diacyl-sn-glyceryl-L-cysteinyl-[prolipoprotein] + sn-glycerol 1-phosphate + H(+)</text>
        <dbReference type="Rhea" id="RHEA:56712"/>
        <dbReference type="Rhea" id="RHEA-COMP:14679"/>
        <dbReference type="Rhea" id="RHEA-COMP:14680"/>
        <dbReference type="ChEBI" id="CHEBI:15378"/>
        <dbReference type="ChEBI" id="CHEBI:29950"/>
        <dbReference type="ChEBI" id="CHEBI:57685"/>
        <dbReference type="ChEBI" id="CHEBI:64716"/>
        <dbReference type="ChEBI" id="CHEBI:140658"/>
        <dbReference type="EC" id="2.5.1.145"/>
    </reaction>
</comment>
<comment type="pathway">
    <text evidence="1">Protein modification; lipoprotein biosynthesis (diacylglyceryl transfer).</text>
</comment>
<comment type="subcellular location">
    <subcellularLocation>
        <location evidence="1">Cell membrane</location>
        <topology evidence="1">Multi-pass membrane protein</topology>
    </subcellularLocation>
</comment>
<comment type="similarity">
    <text evidence="1">Belongs to the Lgt family.</text>
</comment>
<proteinExistence type="inferred from homology"/>
<gene>
    <name evidence="1" type="primary">lgt</name>
    <name type="ordered locus">CLK_2606</name>
</gene>
<evidence type="ECO:0000255" key="1">
    <source>
        <dbReference type="HAMAP-Rule" id="MF_01147"/>
    </source>
</evidence>
<keyword id="KW-1003">Cell membrane</keyword>
<keyword id="KW-0472">Membrane</keyword>
<keyword id="KW-0808">Transferase</keyword>
<keyword id="KW-0812">Transmembrane</keyword>
<keyword id="KW-1133">Transmembrane helix</keyword>
<sequence length="254" mass="29214">MNPIAFHVGNLAIRWYGVIISIGAALGLLLAMYNCKIREASYDEFINMFLIAFPSAIIGARLYYVIFEFEDYRDNLINIFNTRQGGLAIHGGIIFGVLAVYIYLKYRKENFFEYVDVAAPSIILGQAIGRWGNFFNSEAHGGPVTKEFISKFPQFIQKGMFIEGTYYHPTFLYESIWNFIVCIFLVYLLKKTKKKGIVFMAYIGLYSLGRFFIEGLRTDSLYLGSIRVAQLISVLGIILSIFFIYNIIKKEKRY</sequence>